<reference key="1">
    <citation type="journal article" date="2001" name="Proc. Natl. Acad. Sci. U.S.A.">
        <title>Genome sequence of an industrial microorganism Streptomyces avermitilis: deducing the ability of producing secondary metabolites.</title>
        <authorList>
            <person name="Omura S."/>
            <person name="Ikeda H."/>
            <person name="Ishikawa J."/>
            <person name="Hanamoto A."/>
            <person name="Takahashi C."/>
            <person name="Shinose M."/>
            <person name="Takahashi Y."/>
            <person name="Horikawa H."/>
            <person name="Nakazawa H."/>
            <person name="Osonoe T."/>
            <person name="Kikuchi H."/>
            <person name="Shiba T."/>
            <person name="Sakaki Y."/>
            <person name="Hattori M."/>
        </authorList>
    </citation>
    <scope>NUCLEOTIDE SEQUENCE [LARGE SCALE GENOMIC DNA]</scope>
    <source>
        <strain>ATCC 31267 / DSM 46492 / JCM 5070 / NBRC 14893 / NCIMB 12804 / NRRL 8165 / MA-4680</strain>
    </source>
</reference>
<reference key="2">
    <citation type="journal article" date="2003" name="Nat. Biotechnol.">
        <title>Complete genome sequence and comparative analysis of the industrial microorganism Streptomyces avermitilis.</title>
        <authorList>
            <person name="Ikeda H."/>
            <person name="Ishikawa J."/>
            <person name="Hanamoto A."/>
            <person name="Shinose M."/>
            <person name="Kikuchi H."/>
            <person name="Shiba T."/>
            <person name="Sakaki Y."/>
            <person name="Hattori M."/>
            <person name="Omura S."/>
        </authorList>
    </citation>
    <scope>NUCLEOTIDE SEQUENCE [LARGE SCALE GENOMIC DNA]</scope>
    <source>
        <strain>ATCC 31267 / DSM 46492 / JCM 5070 / NBRC 14893 / NCIMB 12804 / NRRL 8165 / MA-4680</strain>
    </source>
</reference>
<evidence type="ECO:0000250" key="1"/>
<evidence type="ECO:0000305" key="2"/>
<accession>Q82E76</accession>
<protein>
    <recommendedName>
        <fullName>Porphobilinogen deaminase 1</fullName>
        <shortName>PBG 1</shortName>
        <ecNumber>2.5.1.61</ecNumber>
    </recommendedName>
    <alternativeName>
        <fullName>Hydroxymethylbilane synthase 1</fullName>
        <shortName>HMBS 1</shortName>
    </alternativeName>
    <alternativeName>
        <fullName>Pre-uroporphyrinogen synthase 1</fullName>
    </alternativeName>
</protein>
<comment type="function">
    <text evidence="1">Tetrapolymerization of the monopyrrole PBG into the hydroxymethylbilane pre-uroporphyrinogen in several discrete steps.</text>
</comment>
<comment type="catalytic activity">
    <reaction>
        <text>4 porphobilinogen + H2O = hydroxymethylbilane + 4 NH4(+)</text>
        <dbReference type="Rhea" id="RHEA:13185"/>
        <dbReference type="ChEBI" id="CHEBI:15377"/>
        <dbReference type="ChEBI" id="CHEBI:28938"/>
        <dbReference type="ChEBI" id="CHEBI:57845"/>
        <dbReference type="ChEBI" id="CHEBI:58126"/>
        <dbReference type="EC" id="2.5.1.61"/>
    </reaction>
</comment>
<comment type="cofactor">
    <cofactor evidence="1">
        <name>dipyrromethane</name>
        <dbReference type="ChEBI" id="CHEBI:60342"/>
    </cofactor>
    <text evidence="1">Binds 1 dipyrromethane group covalently.</text>
</comment>
<comment type="pathway">
    <text>Porphyrin-containing compound metabolism; protoporphyrin-IX biosynthesis; coproporphyrinogen-III from 5-aminolevulinate: step 2/4.</text>
</comment>
<comment type="subunit">
    <text evidence="1">Monomer.</text>
</comment>
<comment type="miscellaneous">
    <text evidence="1">The porphobilinogen subunits are added to the dipyrromethane group.</text>
</comment>
<comment type="similarity">
    <text evidence="2">Belongs to the HMBS family.</text>
</comment>
<organism>
    <name type="scientific">Streptomyces avermitilis (strain ATCC 31267 / DSM 46492 / JCM 5070 / NBRC 14893 / NCIMB 12804 / NRRL 8165 / MA-4680)</name>
    <dbReference type="NCBI Taxonomy" id="227882"/>
    <lineage>
        <taxon>Bacteria</taxon>
        <taxon>Bacillati</taxon>
        <taxon>Actinomycetota</taxon>
        <taxon>Actinomycetes</taxon>
        <taxon>Kitasatosporales</taxon>
        <taxon>Streptomycetaceae</taxon>
        <taxon>Streptomyces</taxon>
    </lineage>
</organism>
<gene>
    <name type="primary">hemC1</name>
    <name type="ordered locus">SAV_4740</name>
</gene>
<dbReference type="EC" id="2.5.1.61"/>
<dbReference type="EMBL" id="BA000030">
    <property type="protein sequence ID" value="BAC72452.1"/>
    <property type="molecule type" value="Genomic_DNA"/>
</dbReference>
<dbReference type="SMR" id="Q82E76"/>
<dbReference type="GeneID" id="41541824"/>
<dbReference type="KEGG" id="sma:SAVERM_4740"/>
<dbReference type="eggNOG" id="COG0181">
    <property type="taxonomic scope" value="Bacteria"/>
</dbReference>
<dbReference type="HOGENOM" id="CLU_019704_1_0_11"/>
<dbReference type="OrthoDB" id="9810298at2"/>
<dbReference type="UniPathway" id="UPA00251">
    <property type="reaction ID" value="UER00319"/>
</dbReference>
<dbReference type="Proteomes" id="UP000000428">
    <property type="component" value="Chromosome"/>
</dbReference>
<dbReference type="GO" id="GO:0005737">
    <property type="term" value="C:cytoplasm"/>
    <property type="evidence" value="ECO:0007669"/>
    <property type="project" value="TreeGrafter"/>
</dbReference>
<dbReference type="GO" id="GO:0004418">
    <property type="term" value="F:hydroxymethylbilane synthase activity"/>
    <property type="evidence" value="ECO:0007669"/>
    <property type="project" value="UniProtKB-UniRule"/>
</dbReference>
<dbReference type="GO" id="GO:0006782">
    <property type="term" value="P:protoporphyrinogen IX biosynthetic process"/>
    <property type="evidence" value="ECO:0007669"/>
    <property type="project" value="UniProtKB-UniRule"/>
</dbReference>
<dbReference type="FunFam" id="3.30.160.40:FF:000001">
    <property type="entry name" value="Porphobilinogen deaminase"/>
    <property type="match status" value="1"/>
</dbReference>
<dbReference type="FunFam" id="3.40.190.10:FF:000005">
    <property type="entry name" value="Porphobilinogen deaminase"/>
    <property type="match status" value="1"/>
</dbReference>
<dbReference type="FunFam" id="3.40.190.10:FF:000086">
    <property type="entry name" value="Probable porphobilinogen deaminase"/>
    <property type="match status" value="1"/>
</dbReference>
<dbReference type="Gene3D" id="3.40.190.10">
    <property type="entry name" value="Periplasmic binding protein-like II"/>
    <property type="match status" value="2"/>
</dbReference>
<dbReference type="Gene3D" id="3.30.160.40">
    <property type="entry name" value="Porphobilinogen deaminase, C-terminal domain"/>
    <property type="match status" value="1"/>
</dbReference>
<dbReference type="HAMAP" id="MF_00260">
    <property type="entry name" value="Porphobil_deam"/>
    <property type="match status" value="1"/>
</dbReference>
<dbReference type="InterPro" id="IPR000860">
    <property type="entry name" value="HemC"/>
</dbReference>
<dbReference type="InterPro" id="IPR022419">
    <property type="entry name" value="Porphobilin_deaminase_cofac_BS"/>
</dbReference>
<dbReference type="InterPro" id="IPR022417">
    <property type="entry name" value="Porphobilin_deaminase_N"/>
</dbReference>
<dbReference type="InterPro" id="IPR022418">
    <property type="entry name" value="Porphobilinogen_deaminase_C"/>
</dbReference>
<dbReference type="InterPro" id="IPR036803">
    <property type="entry name" value="Porphobilinogen_deaminase_C_sf"/>
</dbReference>
<dbReference type="NCBIfam" id="TIGR00212">
    <property type="entry name" value="hemC"/>
    <property type="match status" value="1"/>
</dbReference>
<dbReference type="PANTHER" id="PTHR11557">
    <property type="entry name" value="PORPHOBILINOGEN DEAMINASE"/>
    <property type="match status" value="1"/>
</dbReference>
<dbReference type="PANTHER" id="PTHR11557:SF0">
    <property type="entry name" value="PORPHOBILINOGEN DEAMINASE"/>
    <property type="match status" value="1"/>
</dbReference>
<dbReference type="Pfam" id="PF01379">
    <property type="entry name" value="Porphobil_deam"/>
    <property type="match status" value="1"/>
</dbReference>
<dbReference type="Pfam" id="PF03900">
    <property type="entry name" value="Porphobil_deamC"/>
    <property type="match status" value="1"/>
</dbReference>
<dbReference type="PIRSF" id="PIRSF001438">
    <property type="entry name" value="4pyrrol_synth_OHMeBilane_synth"/>
    <property type="match status" value="1"/>
</dbReference>
<dbReference type="PRINTS" id="PR00151">
    <property type="entry name" value="PORPHBDMNASE"/>
</dbReference>
<dbReference type="SUPFAM" id="SSF53850">
    <property type="entry name" value="Periplasmic binding protein-like II"/>
    <property type="match status" value="1"/>
</dbReference>
<dbReference type="SUPFAM" id="SSF54782">
    <property type="entry name" value="Porphobilinogen deaminase (hydroxymethylbilane synthase), C-terminal domain"/>
    <property type="match status" value="1"/>
</dbReference>
<dbReference type="PROSITE" id="PS00533">
    <property type="entry name" value="PORPHOBILINOGEN_DEAM"/>
    <property type="match status" value="1"/>
</dbReference>
<keyword id="KW-0627">Porphyrin biosynthesis</keyword>
<keyword id="KW-1185">Reference proteome</keyword>
<keyword id="KW-0808">Transferase</keyword>
<proteinExistence type="inferred from homology"/>
<feature type="chain" id="PRO_0000142997" description="Porphobilinogen deaminase 1">
    <location>
        <begin position="1"/>
        <end position="324"/>
    </location>
</feature>
<feature type="modified residue" description="S-(dipyrrolylmethanemethyl)cysteine" evidence="1">
    <location>
        <position position="249"/>
    </location>
</feature>
<sequence length="324" mass="33772">MSEQALRLGTRRSKLAMAQSGQVADAVRQVTGRPVELVEITTYGDTSREHLAQIGGTGVFVTALRDALLRGEVDFAVHSLKDLPTAQPDELALAAVPVREDPRDVLVARDGLTFEELGAPSPKGTARVGTGSPRRMAQLNAYARSHGLAVETVPIRGNVDSRIGYVRSGELDGVVLAAAGLHRIGRIDEVTEFLPVDTVLPAPGQGALAIECAADNADLIAALAELDDPFTRAAVTAERSLLAALEAGCSAPVGALADLLADGQIVTEMRLRGVVGTTDGSTLVQLSTTGPVPETHDQAMALGRELAAEMLAKGAAGLMGEREH</sequence>
<name>HEM31_STRAW</name>